<comment type="catalytic activity">
    <reaction evidence="1">
        <text>tRNA(Gln) + L-glutamine + ATP = L-glutaminyl-tRNA(Gln) + AMP + diphosphate</text>
        <dbReference type="Rhea" id="RHEA:20121"/>
        <dbReference type="Rhea" id="RHEA-COMP:9662"/>
        <dbReference type="Rhea" id="RHEA-COMP:9681"/>
        <dbReference type="ChEBI" id="CHEBI:30616"/>
        <dbReference type="ChEBI" id="CHEBI:33019"/>
        <dbReference type="ChEBI" id="CHEBI:58359"/>
        <dbReference type="ChEBI" id="CHEBI:78442"/>
        <dbReference type="ChEBI" id="CHEBI:78521"/>
        <dbReference type="ChEBI" id="CHEBI:456215"/>
        <dbReference type="EC" id="6.1.1.18"/>
    </reaction>
</comment>
<comment type="subunit">
    <text evidence="1">Monomer.</text>
</comment>
<comment type="subcellular location">
    <subcellularLocation>
        <location evidence="1">Cytoplasm</location>
    </subcellularLocation>
</comment>
<comment type="similarity">
    <text evidence="1">Belongs to the class-I aminoacyl-tRNA synthetase family.</text>
</comment>
<proteinExistence type="inferred from homology"/>
<keyword id="KW-0030">Aminoacyl-tRNA synthetase</keyword>
<keyword id="KW-0067">ATP-binding</keyword>
<keyword id="KW-0963">Cytoplasm</keyword>
<keyword id="KW-0436">Ligase</keyword>
<keyword id="KW-0547">Nucleotide-binding</keyword>
<keyword id="KW-0648">Protein biosynthesis</keyword>
<gene>
    <name evidence="1" type="primary">glnS</name>
    <name type="ordered locus">SeSA_A0841</name>
</gene>
<reference key="1">
    <citation type="journal article" date="2011" name="J. Bacteriol.">
        <title>Comparative genomics of 28 Salmonella enterica isolates: evidence for CRISPR-mediated adaptive sublineage evolution.</title>
        <authorList>
            <person name="Fricke W.F."/>
            <person name="Mammel M.K."/>
            <person name="McDermott P.F."/>
            <person name="Tartera C."/>
            <person name="White D.G."/>
            <person name="Leclerc J.E."/>
            <person name="Ravel J."/>
            <person name="Cebula T.A."/>
        </authorList>
    </citation>
    <scope>NUCLEOTIDE SEQUENCE [LARGE SCALE GENOMIC DNA]</scope>
    <source>
        <strain>CVM19633</strain>
    </source>
</reference>
<organism>
    <name type="scientific">Salmonella schwarzengrund (strain CVM19633)</name>
    <dbReference type="NCBI Taxonomy" id="439843"/>
    <lineage>
        <taxon>Bacteria</taxon>
        <taxon>Pseudomonadati</taxon>
        <taxon>Pseudomonadota</taxon>
        <taxon>Gammaproteobacteria</taxon>
        <taxon>Enterobacterales</taxon>
        <taxon>Enterobacteriaceae</taxon>
        <taxon>Salmonella</taxon>
    </lineage>
</organism>
<evidence type="ECO:0000255" key="1">
    <source>
        <dbReference type="HAMAP-Rule" id="MF_00126"/>
    </source>
</evidence>
<dbReference type="EC" id="6.1.1.18" evidence="1"/>
<dbReference type="EMBL" id="CP001127">
    <property type="protein sequence ID" value="ACF91851.1"/>
    <property type="molecule type" value="Genomic_DNA"/>
</dbReference>
<dbReference type="RefSeq" id="WP_001287186.1">
    <property type="nucleotide sequence ID" value="NC_011094.1"/>
</dbReference>
<dbReference type="SMR" id="B4TQ00"/>
<dbReference type="KEGG" id="sew:SeSA_A0841"/>
<dbReference type="HOGENOM" id="CLU_001882_2_3_6"/>
<dbReference type="Proteomes" id="UP000001865">
    <property type="component" value="Chromosome"/>
</dbReference>
<dbReference type="GO" id="GO:0005829">
    <property type="term" value="C:cytosol"/>
    <property type="evidence" value="ECO:0007669"/>
    <property type="project" value="TreeGrafter"/>
</dbReference>
<dbReference type="GO" id="GO:0005524">
    <property type="term" value="F:ATP binding"/>
    <property type="evidence" value="ECO:0007669"/>
    <property type="project" value="UniProtKB-UniRule"/>
</dbReference>
<dbReference type="GO" id="GO:0004819">
    <property type="term" value="F:glutamine-tRNA ligase activity"/>
    <property type="evidence" value="ECO:0007669"/>
    <property type="project" value="UniProtKB-UniRule"/>
</dbReference>
<dbReference type="GO" id="GO:0006425">
    <property type="term" value="P:glutaminyl-tRNA aminoacylation"/>
    <property type="evidence" value="ECO:0007669"/>
    <property type="project" value="InterPro"/>
</dbReference>
<dbReference type="GO" id="GO:0006424">
    <property type="term" value="P:glutamyl-tRNA aminoacylation"/>
    <property type="evidence" value="ECO:0007669"/>
    <property type="project" value="UniProtKB-UniRule"/>
</dbReference>
<dbReference type="CDD" id="cd00807">
    <property type="entry name" value="GlnRS_core"/>
    <property type="match status" value="1"/>
</dbReference>
<dbReference type="FunFam" id="1.10.1160.10:FF:000001">
    <property type="entry name" value="Glutamine--tRNA ligase"/>
    <property type="match status" value="1"/>
</dbReference>
<dbReference type="FunFam" id="2.40.240.10:FF:000001">
    <property type="entry name" value="Glutamine--tRNA ligase"/>
    <property type="match status" value="1"/>
</dbReference>
<dbReference type="FunFam" id="2.40.240.10:FF:000003">
    <property type="entry name" value="Glutamine--tRNA ligase"/>
    <property type="match status" value="1"/>
</dbReference>
<dbReference type="FunFam" id="3.90.800.10:FF:000001">
    <property type="entry name" value="Glutamine--tRNA ligase"/>
    <property type="match status" value="1"/>
</dbReference>
<dbReference type="FunFam" id="3.40.50.620:FF:000037">
    <property type="entry name" value="Glutamine--tRNA ligase cytoplasmic"/>
    <property type="match status" value="1"/>
</dbReference>
<dbReference type="Gene3D" id="1.10.1160.10">
    <property type="entry name" value="Glutamyl-trna Synthetase, Domain 2"/>
    <property type="match status" value="1"/>
</dbReference>
<dbReference type="Gene3D" id="3.90.800.10">
    <property type="entry name" value="Glutamyl-tRNA Synthetase, Domain 3"/>
    <property type="match status" value="1"/>
</dbReference>
<dbReference type="Gene3D" id="3.40.50.620">
    <property type="entry name" value="HUPs"/>
    <property type="match status" value="1"/>
</dbReference>
<dbReference type="Gene3D" id="2.40.240.10">
    <property type="entry name" value="Ribosomal Protein L25, Chain P"/>
    <property type="match status" value="2"/>
</dbReference>
<dbReference type="HAMAP" id="MF_00126">
    <property type="entry name" value="Gln_tRNA_synth"/>
    <property type="match status" value="1"/>
</dbReference>
<dbReference type="InterPro" id="IPR001412">
    <property type="entry name" value="aa-tRNA-synth_I_CS"/>
</dbReference>
<dbReference type="InterPro" id="IPR004514">
    <property type="entry name" value="Gln-tRNA-synth"/>
</dbReference>
<dbReference type="InterPro" id="IPR050132">
    <property type="entry name" value="Gln/Glu-tRNA_Ligase"/>
</dbReference>
<dbReference type="InterPro" id="IPR022861">
    <property type="entry name" value="Gln_tRNA_ligase_bac"/>
</dbReference>
<dbReference type="InterPro" id="IPR000924">
    <property type="entry name" value="Glu/Gln-tRNA-synth"/>
</dbReference>
<dbReference type="InterPro" id="IPR020058">
    <property type="entry name" value="Glu/Gln-tRNA-synth_Ib_cat-dom"/>
</dbReference>
<dbReference type="InterPro" id="IPR020059">
    <property type="entry name" value="Glu/Gln-tRNA-synth_Ib_codon-bd"/>
</dbReference>
<dbReference type="InterPro" id="IPR020061">
    <property type="entry name" value="Glu_tRNA_lig_a-bdl"/>
</dbReference>
<dbReference type="InterPro" id="IPR020056">
    <property type="entry name" value="Rbsml_bL25/Gln-tRNA_synth_N"/>
</dbReference>
<dbReference type="InterPro" id="IPR011035">
    <property type="entry name" value="Ribosomal_bL25/Gln-tRNA_synth"/>
</dbReference>
<dbReference type="InterPro" id="IPR014729">
    <property type="entry name" value="Rossmann-like_a/b/a_fold"/>
</dbReference>
<dbReference type="InterPro" id="IPR049437">
    <property type="entry name" value="tRNA-synt_1c_C2"/>
</dbReference>
<dbReference type="NCBIfam" id="TIGR00440">
    <property type="entry name" value="glnS"/>
    <property type="match status" value="1"/>
</dbReference>
<dbReference type="NCBIfam" id="NF011291">
    <property type="entry name" value="PRK14703.1"/>
    <property type="match status" value="1"/>
</dbReference>
<dbReference type="PANTHER" id="PTHR43097:SF5">
    <property type="entry name" value="GLUTAMATE--TRNA LIGASE"/>
    <property type="match status" value="1"/>
</dbReference>
<dbReference type="PANTHER" id="PTHR43097">
    <property type="entry name" value="GLUTAMINE-TRNA LIGASE"/>
    <property type="match status" value="1"/>
</dbReference>
<dbReference type="Pfam" id="PF00749">
    <property type="entry name" value="tRNA-synt_1c"/>
    <property type="match status" value="1"/>
</dbReference>
<dbReference type="Pfam" id="PF03950">
    <property type="entry name" value="tRNA-synt_1c_C"/>
    <property type="match status" value="1"/>
</dbReference>
<dbReference type="Pfam" id="PF20974">
    <property type="entry name" value="tRNA-synt_1c_C2"/>
    <property type="match status" value="1"/>
</dbReference>
<dbReference type="PRINTS" id="PR00987">
    <property type="entry name" value="TRNASYNTHGLU"/>
</dbReference>
<dbReference type="SUPFAM" id="SSF52374">
    <property type="entry name" value="Nucleotidylyl transferase"/>
    <property type="match status" value="1"/>
</dbReference>
<dbReference type="SUPFAM" id="SSF50715">
    <property type="entry name" value="Ribosomal protein L25-like"/>
    <property type="match status" value="1"/>
</dbReference>
<dbReference type="PROSITE" id="PS00178">
    <property type="entry name" value="AA_TRNA_LIGASE_I"/>
    <property type="match status" value="1"/>
</dbReference>
<protein>
    <recommendedName>
        <fullName evidence="1">Glutamine--tRNA ligase</fullName>
        <ecNumber evidence="1">6.1.1.18</ecNumber>
    </recommendedName>
    <alternativeName>
        <fullName evidence="1">Glutaminyl-tRNA synthetase</fullName>
        <shortName evidence="1">GlnRS</shortName>
    </alternativeName>
</protein>
<name>SYQ_SALSV</name>
<feature type="chain" id="PRO_1000095515" description="Glutamine--tRNA ligase">
    <location>
        <begin position="1"/>
        <end position="555"/>
    </location>
</feature>
<feature type="region of interest" description="Interaction with tRNA" evidence="1">
    <location>
        <begin position="317"/>
        <end position="324"/>
    </location>
</feature>
<feature type="short sequence motif" description="'HIGH' region" evidence="1">
    <location>
        <begin position="34"/>
        <end position="44"/>
    </location>
</feature>
<feature type="short sequence motif" description="'KMSKS' region" evidence="1">
    <location>
        <begin position="268"/>
        <end position="272"/>
    </location>
</feature>
<feature type="binding site" evidence="1">
    <location>
        <begin position="35"/>
        <end position="37"/>
    </location>
    <ligand>
        <name>ATP</name>
        <dbReference type="ChEBI" id="CHEBI:30616"/>
    </ligand>
</feature>
<feature type="binding site" evidence="1">
    <location>
        <begin position="41"/>
        <end position="47"/>
    </location>
    <ligand>
        <name>ATP</name>
        <dbReference type="ChEBI" id="CHEBI:30616"/>
    </ligand>
</feature>
<feature type="binding site" evidence="1">
    <location>
        <position position="67"/>
    </location>
    <ligand>
        <name>L-glutamine</name>
        <dbReference type="ChEBI" id="CHEBI:58359"/>
    </ligand>
</feature>
<feature type="binding site" evidence="1">
    <location>
        <position position="212"/>
    </location>
    <ligand>
        <name>L-glutamine</name>
        <dbReference type="ChEBI" id="CHEBI:58359"/>
    </ligand>
</feature>
<feature type="binding site" evidence="1">
    <location>
        <position position="231"/>
    </location>
    <ligand>
        <name>ATP</name>
        <dbReference type="ChEBI" id="CHEBI:30616"/>
    </ligand>
</feature>
<feature type="binding site" evidence="1">
    <location>
        <begin position="261"/>
        <end position="262"/>
    </location>
    <ligand>
        <name>ATP</name>
        <dbReference type="ChEBI" id="CHEBI:30616"/>
    </ligand>
</feature>
<feature type="binding site" evidence="1">
    <location>
        <begin position="269"/>
        <end position="271"/>
    </location>
    <ligand>
        <name>ATP</name>
        <dbReference type="ChEBI" id="CHEBI:30616"/>
    </ligand>
</feature>
<sequence length="555" mass="63525">MSEAEARPTNFIRQIIDEDLASGKHTTVHTRFPPEPNGYLHIGHAKSICLNFGIAQDYQGQCNLRFDDTNPVKEDIEYVDSIKNDVEWLGFHWSGDIRYSSDYFDQLHAYAVELINKGLAYVDELTPEQIREYRGTLTAPGKNSPFRDRSVEENLALFEKMRTGGFEEGKACLRAKIDMASPFIVMRDPVLYRIKFAEHHQTGTKWCIYPMYDFTHCISDALEGITHSLCTLEFQDNRRLYDWVLDNITIPVHPRQYEFSRLNLEYTVMSKRKLNLLVTDKHVEGWDDPRMPTISGLRRRGYTAASIREFCKRIGVTKQDNTIEMASLESCIREDLNENAPRAMAVIDPVKLVIENYPQGESEMVTMPNHPNKPEMGSREVPFSGEIWIDRADFREEANKQYKRLVMGKEVRLRNAYVIKAERVEKDAEGNITTIFCTYDADTLSKDPADGRKVKGVIHWVSAAHALPIEIRLYDRLFSVPNPGAAEDFLSVINPESLVIKQGYGEPSLKAAVAGKAFQFEREGYFCLDSRYATADKLVFNRTVGLRDTWAKAGE</sequence>
<accession>B4TQ00</accession>